<dbReference type="EMBL" id="DQ899947">
    <property type="protein sequence ID" value="ABI32547.1"/>
    <property type="molecule type" value="Genomic_DNA"/>
</dbReference>
<dbReference type="RefSeq" id="YP_740240.1">
    <property type="nucleotide sequence ID" value="NC_008326.1"/>
</dbReference>
<dbReference type="SMR" id="Q0G9I1"/>
<dbReference type="GeneID" id="4266664"/>
<dbReference type="GO" id="GO:0009507">
    <property type="term" value="C:chloroplast"/>
    <property type="evidence" value="ECO:0007669"/>
    <property type="project" value="UniProtKB-SubCell"/>
</dbReference>
<dbReference type="GO" id="GO:0005762">
    <property type="term" value="C:mitochondrial large ribosomal subunit"/>
    <property type="evidence" value="ECO:0007669"/>
    <property type="project" value="TreeGrafter"/>
</dbReference>
<dbReference type="GO" id="GO:0019843">
    <property type="term" value="F:rRNA binding"/>
    <property type="evidence" value="ECO:0007669"/>
    <property type="project" value="InterPro"/>
</dbReference>
<dbReference type="GO" id="GO:0003735">
    <property type="term" value="F:structural constituent of ribosome"/>
    <property type="evidence" value="ECO:0007669"/>
    <property type="project" value="InterPro"/>
</dbReference>
<dbReference type="GO" id="GO:0032543">
    <property type="term" value="P:mitochondrial translation"/>
    <property type="evidence" value="ECO:0007669"/>
    <property type="project" value="TreeGrafter"/>
</dbReference>
<dbReference type="CDD" id="cd01433">
    <property type="entry name" value="Ribosomal_L16_L10e"/>
    <property type="match status" value="1"/>
</dbReference>
<dbReference type="FunFam" id="3.90.1170.10:FF:000001">
    <property type="entry name" value="50S ribosomal protein L16"/>
    <property type="match status" value="1"/>
</dbReference>
<dbReference type="Gene3D" id="3.90.1170.10">
    <property type="entry name" value="Ribosomal protein L10e/L16"/>
    <property type="match status" value="1"/>
</dbReference>
<dbReference type="HAMAP" id="MF_01342">
    <property type="entry name" value="Ribosomal_uL16"/>
    <property type="match status" value="1"/>
</dbReference>
<dbReference type="InterPro" id="IPR047873">
    <property type="entry name" value="Ribosomal_uL16"/>
</dbReference>
<dbReference type="InterPro" id="IPR000114">
    <property type="entry name" value="Ribosomal_uL16_bact-type"/>
</dbReference>
<dbReference type="InterPro" id="IPR020798">
    <property type="entry name" value="Ribosomal_uL16_CS"/>
</dbReference>
<dbReference type="InterPro" id="IPR016180">
    <property type="entry name" value="Ribosomal_uL16_dom"/>
</dbReference>
<dbReference type="InterPro" id="IPR036920">
    <property type="entry name" value="Ribosomal_uL16_sf"/>
</dbReference>
<dbReference type="NCBIfam" id="TIGR01164">
    <property type="entry name" value="rplP_bact"/>
    <property type="match status" value="1"/>
</dbReference>
<dbReference type="PANTHER" id="PTHR12220">
    <property type="entry name" value="50S/60S RIBOSOMAL PROTEIN L16"/>
    <property type="match status" value="1"/>
</dbReference>
<dbReference type="PANTHER" id="PTHR12220:SF13">
    <property type="entry name" value="LARGE RIBOSOMAL SUBUNIT PROTEIN UL16M"/>
    <property type="match status" value="1"/>
</dbReference>
<dbReference type="Pfam" id="PF00252">
    <property type="entry name" value="Ribosomal_L16"/>
    <property type="match status" value="1"/>
</dbReference>
<dbReference type="PRINTS" id="PR00060">
    <property type="entry name" value="RIBOSOMALL16"/>
</dbReference>
<dbReference type="SUPFAM" id="SSF54686">
    <property type="entry name" value="Ribosomal protein L16p/L10e"/>
    <property type="match status" value="1"/>
</dbReference>
<dbReference type="PROSITE" id="PS00586">
    <property type="entry name" value="RIBOSOMAL_L16_1"/>
    <property type="match status" value="1"/>
</dbReference>
<dbReference type="PROSITE" id="PS00701">
    <property type="entry name" value="RIBOSOMAL_L16_2"/>
    <property type="match status" value="1"/>
</dbReference>
<comment type="subunit">
    <text evidence="1">Part of the 50S ribosomal subunit.</text>
</comment>
<comment type="subcellular location">
    <subcellularLocation>
        <location>Plastid</location>
        <location>Chloroplast</location>
    </subcellularLocation>
</comment>
<comment type="similarity">
    <text evidence="1">Belongs to the universal ribosomal protein uL16 family.</text>
</comment>
<accession>Q0G9I1</accession>
<sequence>MPKRTRFRKQHRGRMKGISYRGNHICFGRYALQALEPAWITSRQIEAGRRAMTRYARRGGKIWVRIFPDKPVTVRPTETRMGSGKGSPEYWVSVVKPGRILYEMGGVSETVARAAIKIAACKMPIRTQFIISG</sequence>
<protein>
    <recommendedName>
        <fullName evidence="1">Large ribosomal subunit protein uL16c</fullName>
    </recommendedName>
    <alternativeName>
        <fullName evidence="2">50S ribosomal protein L16, chloroplastic</fullName>
    </alternativeName>
</protein>
<gene>
    <name evidence="1" type="primary">rpl16</name>
</gene>
<proteinExistence type="inferred from homology"/>
<evidence type="ECO:0000255" key="1">
    <source>
        <dbReference type="HAMAP-Rule" id="MF_01342"/>
    </source>
</evidence>
<evidence type="ECO:0000305" key="2"/>
<geneLocation type="chloroplast"/>
<reference key="1">
    <citation type="journal article" date="2006" name="BMC Evol. Biol.">
        <title>Complete plastid genome sequences of Drimys, Liriodendron, and Piper: implications for the phylogenetic relationships of magnoliids.</title>
        <authorList>
            <person name="Cai Z."/>
            <person name="Penaflor C."/>
            <person name="Kuehl J.V."/>
            <person name="Leebens-Mack J."/>
            <person name="Carlson J.E."/>
            <person name="dePamphilis C.W."/>
            <person name="Boore J.L."/>
            <person name="Jansen R.K."/>
        </authorList>
    </citation>
    <scope>NUCLEOTIDE SEQUENCE [LARGE SCALE GENOMIC DNA]</scope>
</reference>
<name>RK16_LIRTU</name>
<organism>
    <name type="scientific">Liriodendron tulipifera</name>
    <name type="common">Tuliptree</name>
    <name type="synonym">Tulip poplar</name>
    <dbReference type="NCBI Taxonomy" id="3415"/>
    <lineage>
        <taxon>Eukaryota</taxon>
        <taxon>Viridiplantae</taxon>
        <taxon>Streptophyta</taxon>
        <taxon>Embryophyta</taxon>
        <taxon>Tracheophyta</taxon>
        <taxon>Spermatophyta</taxon>
        <taxon>Magnoliopsida</taxon>
        <taxon>Magnoliidae</taxon>
        <taxon>Magnoliales</taxon>
        <taxon>Magnoliaceae</taxon>
        <taxon>Liriodendron</taxon>
    </lineage>
</organism>
<feature type="chain" id="PRO_0000276385" description="Large ribosomal subunit protein uL16c">
    <location>
        <begin position="1"/>
        <end position="133"/>
    </location>
</feature>
<keyword id="KW-0150">Chloroplast</keyword>
<keyword id="KW-0934">Plastid</keyword>
<keyword id="KW-0687">Ribonucleoprotein</keyword>
<keyword id="KW-0689">Ribosomal protein</keyword>